<dbReference type="EMBL" id="Y09059">
    <property type="protein sequence ID" value="CAA70262.1"/>
    <property type="molecule type" value="Genomic_DNA"/>
</dbReference>
<dbReference type="PIR" id="S77723">
    <property type="entry name" value="S77723"/>
</dbReference>
<dbReference type="SMR" id="O52903"/>
<dbReference type="STRING" id="1333848.CFNIH1_07425"/>
<dbReference type="GO" id="GO:0009279">
    <property type="term" value="C:cell outer membrane"/>
    <property type="evidence" value="ECO:0007669"/>
    <property type="project" value="UniProtKB-SubCell"/>
</dbReference>
<dbReference type="GO" id="GO:0046930">
    <property type="term" value="C:pore complex"/>
    <property type="evidence" value="ECO:0007669"/>
    <property type="project" value="UniProtKB-KW"/>
</dbReference>
<dbReference type="GO" id="GO:0015420">
    <property type="term" value="F:ABC-type vitamin B12 transporter activity"/>
    <property type="evidence" value="ECO:0007669"/>
    <property type="project" value="InterPro"/>
</dbReference>
<dbReference type="GO" id="GO:0046872">
    <property type="term" value="F:metal ion binding"/>
    <property type="evidence" value="ECO:0007669"/>
    <property type="project" value="UniProtKB-KW"/>
</dbReference>
<dbReference type="GO" id="GO:0015288">
    <property type="term" value="F:porin activity"/>
    <property type="evidence" value="ECO:0007669"/>
    <property type="project" value="UniProtKB-KW"/>
</dbReference>
<dbReference type="GO" id="GO:0006811">
    <property type="term" value="P:monoatomic ion transport"/>
    <property type="evidence" value="ECO:0007669"/>
    <property type="project" value="UniProtKB-KW"/>
</dbReference>
<dbReference type="CDD" id="cd01347">
    <property type="entry name" value="ligand_gated_channel"/>
    <property type="match status" value="1"/>
</dbReference>
<dbReference type="FunFam" id="2.170.130.10:FF:000002">
    <property type="entry name" value="Vitamin B12 transporter BtuB"/>
    <property type="match status" value="1"/>
</dbReference>
<dbReference type="FunFam" id="2.40.170.20:FF:000001">
    <property type="entry name" value="Vitamin B12 transporter BtuB"/>
    <property type="match status" value="1"/>
</dbReference>
<dbReference type="Gene3D" id="2.40.170.20">
    <property type="entry name" value="TonB-dependent receptor, beta-barrel domain"/>
    <property type="match status" value="1"/>
</dbReference>
<dbReference type="Gene3D" id="2.170.130.10">
    <property type="entry name" value="TonB-dependent receptor, plug domain"/>
    <property type="match status" value="1"/>
</dbReference>
<dbReference type="HAMAP" id="MF_01531">
    <property type="entry name" value="BtuB"/>
    <property type="match status" value="1"/>
</dbReference>
<dbReference type="InterPro" id="IPR010101">
    <property type="entry name" value="B12_transptr_BtuB"/>
</dbReference>
<dbReference type="InterPro" id="IPR012910">
    <property type="entry name" value="Plug_dom"/>
</dbReference>
<dbReference type="InterPro" id="IPR037066">
    <property type="entry name" value="Plug_dom_sf"/>
</dbReference>
<dbReference type="InterPro" id="IPR039426">
    <property type="entry name" value="TonB-dep_rcpt-like"/>
</dbReference>
<dbReference type="InterPro" id="IPR000531">
    <property type="entry name" value="TonB-dep_rcpt_b-brl"/>
</dbReference>
<dbReference type="InterPro" id="IPR010916">
    <property type="entry name" value="TonB_box_CS"/>
</dbReference>
<dbReference type="InterPro" id="IPR036942">
    <property type="entry name" value="TonB_rcpt_b-brl_sf"/>
</dbReference>
<dbReference type="InterPro" id="IPR010917">
    <property type="entry name" value="TonB_rcpt_CS"/>
</dbReference>
<dbReference type="NCBIfam" id="NF007926">
    <property type="entry name" value="PRK10641.1"/>
    <property type="match status" value="1"/>
</dbReference>
<dbReference type="NCBIfam" id="TIGR01779">
    <property type="entry name" value="TonB-B12"/>
    <property type="match status" value="1"/>
</dbReference>
<dbReference type="PANTHER" id="PTHR30069:SF53">
    <property type="entry name" value="COLICIN I RECEPTOR-RELATED"/>
    <property type="match status" value="1"/>
</dbReference>
<dbReference type="PANTHER" id="PTHR30069">
    <property type="entry name" value="TONB-DEPENDENT OUTER MEMBRANE RECEPTOR"/>
    <property type="match status" value="1"/>
</dbReference>
<dbReference type="Pfam" id="PF07715">
    <property type="entry name" value="Plug"/>
    <property type="match status" value="1"/>
</dbReference>
<dbReference type="Pfam" id="PF00593">
    <property type="entry name" value="TonB_dep_Rec_b-barrel"/>
    <property type="match status" value="1"/>
</dbReference>
<dbReference type="SUPFAM" id="SSF56935">
    <property type="entry name" value="Porins"/>
    <property type="match status" value="1"/>
</dbReference>
<dbReference type="PROSITE" id="PS00430">
    <property type="entry name" value="TONB_DEPENDENT_REC_1"/>
    <property type="match status" value="1"/>
</dbReference>
<dbReference type="PROSITE" id="PS01156">
    <property type="entry name" value="TONB_DEPENDENT_REC_2"/>
    <property type="match status" value="1"/>
</dbReference>
<dbReference type="PROSITE" id="PS52016">
    <property type="entry name" value="TONB_DEPENDENT_REC_3"/>
    <property type="match status" value="1"/>
</dbReference>
<comment type="function">
    <text evidence="1">Involved in the active translocation of vitamin B12 (cyanocobalamin) across the outer membrane to the periplasmic space. It derives its energy for transport by interacting with the trans-periplasmic membrane protein TonB.</text>
</comment>
<comment type="subcellular location">
    <subcellularLocation>
        <location evidence="1">Cell outer membrane</location>
        <topology evidence="1">Multi-pass membrane protein</topology>
    </subcellularLocation>
</comment>
<comment type="similarity">
    <text evidence="1">Belongs to the TonB-dependent receptor family. BtuB (TC 1.B.14.3.1) subfamily.</text>
</comment>
<feature type="signal peptide" evidence="1">
    <location>
        <begin position="1"/>
        <end position="20"/>
    </location>
</feature>
<feature type="chain" id="PRO_0000003478" description="Vitamin B12 transporter BtuB">
    <location>
        <begin position="21"/>
        <end position="612"/>
    </location>
</feature>
<feature type="transmembrane region" description="Beta stranded" evidence="1">
    <location>
        <begin position="158"/>
        <end position="165"/>
    </location>
</feature>
<feature type="transmembrane region" description="Beta stranded" evidence="1">
    <location>
        <begin position="169"/>
        <end position="178"/>
    </location>
</feature>
<feature type="transmembrane region" description="Beta stranded" evidence="1">
    <location>
        <begin position="184"/>
        <end position="195"/>
    </location>
</feature>
<feature type="transmembrane region" description="Beta stranded" evidence="1">
    <location>
        <begin position="217"/>
        <end position="227"/>
    </location>
</feature>
<feature type="transmembrane region" description="Beta stranded" evidence="1">
    <location>
        <begin position="232"/>
        <end position="248"/>
    </location>
</feature>
<feature type="transmembrane region" description="Beta stranded" evidence="1">
    <location>
        <begin position="263"/>
        <end position="277"/>
    </location>
</feature>
<feature type="transmembrane region" description="Beta stranded" evidence="1">
    <location>
        <begin position="279"/>
        <end position="296"/>
    </location>
</feature>
<feature type="transmembrane region" description="Beta stranded" evidence="1">
    <location>
        <begin position="309"/>
        <end position="325"/>
    </location>
</feature>
<feature type="transmembrane region" description="Beta stranded" evidence="1">
    <location>
        <begin position="328"/>
        <end position="337"/>
    </location>
</feature>
<feature type="transmembrane region" description="Beta stranded" evidence="1">
    <location>
        <begin position="353"/>
        <end position="369"/>
    </location>
</feature>
<feature type="transmembrane region" description="Beta stranded" evidence="1">
    <location>
        <begin position="371"/>
        <end position="381"/>
    </location>
</feature>
<feature type="transmembrane region" description="Beta stranded" evidence="1">
    <location>
        <begin position="385"/>
        <end position="400"/>
    </location>
</feature>
<feature type="transmembrane region" description="Beta stranded" evidence="1">
    <location>
        <begin position="403"/>
        <end position="417"/>
    </location>
</feature>
<feature type="transmembrane region" description="Beta stranded" evidence="1">
    <location>
        <begin position="434"/>
        <end position="443"/>
    </location>
</feature>
<feature type="transmembrane region" description="Beta stranded" evidence="1">
    <location>
        <begin position="449"/>
        <end position="458"/>
    </location>
</feature>
<feature type="transmembrane region" description="Beta stranded" evidence="1">
    <location>
        <begin position="473"/>
        <end position="490"/>
    </location>
</feature>
<feature type="transmembrane region" description="Beta stranded" evidence="1">
    <location>
        <begin position="494"/>
        <end position="509"/>
    </location>
</feature>
<feature type="transmembrane region" description="Beta stranded" evidence="1">
    <location>
        <begin position="517"/>
        <end position="529"/>
    </location>
</feature>
<feature type="transmembrane region" description="Beta stranded" evidence="1">
    <location>
        <begin position="535"/>
        <end position="550"/>
    </location>
</feature>
<feature type="transmembrane region" description="Beta stranded" evidence="1">
    <location>
        <begin position="556"/>
        <end position="570"/>
    </location>
</feature>
<feature type="transmembrane region" description="Beta stranded" evidence="1">
    <location>
        <begin position="583"/>
        <end position="594"/>
    </location>
</feature>
<feature type="transmembrane region" description="Beta stranded" evidence="1">
    <location>
        <begin position="600"/>
        <end position="612"/>
    </location>
</feature>
<feature type="domain" description="TBDR plug" evidence="2">
    <location>
        <begin position="38"/>
        <end position="152"/>
    </location>
</feature>
<feature type="domain" description="TBDR beta-barrel" evidence="2">
    <location>
        <begin position="155"/>
        <end position="612"/>
    </location>
</feature>
<feature type="short sequence motif" description="TonB box">
    <location>
        <begin position="26"/>
        <end position="33"/>
    </location>
</feature>
<feature type="short sequence motif" description="TonB C-terminal box">
    <location>
        <begin position="595"/>
        <end position="612"/>
    </location>
</feature>
<feature type="binding site" evidence="1">
    <location>
        <position position="85"/>
    </location>
    <ligand>
        <name>cyanocob(III)alamin</name>
        <dbReference type="ChEBI" id="CHEBI:17439"/>
    </ligand>
</feature>
<feature type="binding site" evidence="1">
    <location>
        <position position="92"/>
    </location>
    <ligand>
        <name>cyanocob(III)alamin</name>
        <dbReference type="ChEBI" id="CHEBI:17439"/>
    </ligand>
</feature>
<feature type="binding site" evidence="1">
    <location>
        <begin position="110"/>
        <end position="111"/>
    </location>
    <ligand>
        <name>cyanocob(III)alamin</name>
        <dbReference type="ChEBI" id="CHEBI:17439"/>
    </ligand>
</feature>
<feature type="binding site" evidence="1">
    <location>
        <position position="199"/>
    </location>
    <ligand>
        <name>Ca(2+)</name>
        <dbReference type="ChEBI" id="CHEBI:29108"/>
        <label>1</label>
    </ligand>
</feature>
<feature type="binding site" evidence="1">
    <location>
        <position position="211"/>
    </location>
    <ligand>
        <name>Ca(2+)</name>
        <dbReference type="ChEBI" id="CHEBI:29108"/>
        <label>1</label>
    </ligand>
</feature>
<feature type="binding site" evidence="1">
    <location>
        <position position="213"/>
    </location>
    <ligand>
        <name>Ca(2+)</name>
        <dbReference type="ChEBI" id="CHEBI:29108"/>
        <label>1</label>
    </ligand>
</feature>
<feature type="binding site" evidence="1">
    <location>
        <position position="213"/>
    </location>
    <ligand>
        <name>Ca(2+)</name>
        <dbReference type="ChEBI" id="CHEBI:29108"/>
        <label>2</label>
    </ligand>
</feature>
<feature type="binding site" evidence="1">
    <location>
        <position position="215"/>
    </location>
    <ligand>
        <name>Ca(2+)</name>
        <dbReference type="ChEBI" id="CHEBI:29108"/>
        <label>1</label>
    </ligand>
</feature>
<feature type="binding site" evidence="1">
    <location>
        <position position="215"/>
    </location>
    <ligand>
        <name>Ca(2+)</name>
        <dbReference type="ChEBI" id="CHEBI:29108"/>
        <label>2</label>
    </ligand>
</feature>
<feature type="binding site" evidence="1">
    <location>
        <position position="249"/>
    </location>
    <ligand>
        <name>Ca(2+)</name>
        <dbReference type="ChEBI" id="CHEBI:29108"/>
        <label>2</label>
    </ligand>
</feature>
<feature type="binding site" evidence="1">
    <location>
        <position position="250"/>
    </location>
    <ligand>
        <name>Ca(2+)</name>
        <dbReference type="ChEBI" id="CHEBI:29108"/>
        <label>1</label>
    </ligand>
</feature>
<feature type="binding site" evidence="1">
    <location>
        <position position="250"/>
    </location>
    <ligand>
        <name>Ca(2+)</name>
        <dbReference type="ChEBI" id="CHEBI:29108"/>
        <label>2</label>
    </ligand>
</feature>
<feature type="binding site" evidence="1">
    <location>
        <position position="261"/>
    </location>
    <ligand>
        <name>Ca(2+)</name>
        <dbReference type="ChEBI" id="CHEBI:29108"/>
        <label>2</label>
    </ligand>
</feature>
<feature type="binding site" evidence="1">
    <location>
        <position position="309"/>
    </location>
    <ligand>
        <name>cyanocob(III)alamin</name>
        <dbReference type="ChEBI" id="CHEBI:17439"/>
    </ligand>
</feature>
<feature type="binding site" evidence="1">
    <location>
        <position position="517"/>
    </location>
    <ligand>
        <name>cyanocob(III)alamin</name>
        <dbReference type="ChEBI" id="CHEBI:17439"/>
    </ligand>
</feature>
<feature type="binding site" evidence="1">
    <location>
        <position position="551"/>
    </location>
    <ligand>
        <name>cyanocob(III)alamin</name>
        <dbReference type="ChEBI" id="CHEBI:17439"/>
    </ligand>
</feature>
<evidence type="ECO:0000255" key="1">
    <source>
        <dbReference type="HAMAP-Rule" id="MF_01531"/>
    </source>
</evidence>
<evidence type="ECO:0000255" key="2">
    <source>
        <dbReference type="PROSITE-ProRule" id="PRU01360"/>
    </source>
</evidence>
<name>BTUB_CITFR</name>
<proteinExistence type="inferred from homology"/>
<organism>
    <name type="scientific">Citrobacter freundii</name>
    <dbReference type="NCBI Taxonomy" id="546"/>
    <lineage>
        <taxon>Bacteria</taxon>
        <taxon>Pseudomonadati</taxon>
        <taxon>Pseudomonadota</taxon>
        <taxon>Gammaproteobacteria</taxon>
        <taxon>Enterobacterales</taxon>
        <taxon>Enterobacteriaceae</taxon>
        <taxon>Citrobacter</taxon>
        <taxon>Citrobacter freundii complex</taxon>
    </lineage>
</organism>
<protein>
    <recommendedName>
        <fullName evidence="1">Vitamin B12 transporter BtuB</fullName>
    </recommendedName>
    <alternativeName>
        <fullName evidence="1">Cobalamin receptor</fullName>
    </alternativeName>
    <alternativeName>
        <fullName evidence="1">Outer membrane cobalamin translocator</fullName>
    </alternativeName>
</protein>
<reference key="1">
    <citation type="submission" date="1996-10" db="EMBL/GenBank/DDBJ databases">
        <title>Cloning and chimeric analysis of Citrobacter freundii BtuB defines residues essential for phage BF23 infection.</title>
        <authorList>
            <person name="Letley D.P."/>
            <person name="Ward R.J."/>
            <person name="Glass R.E."/>
        </authorList>
    </citation>
    <scope>NUCLEOTIDE SEQUENCE [GENOMIC DNA]</scope>
    <source>
        <strain>ATCC 8090 / DSM 30039 / JCM 1657 / LMG 3246 / NCTC 9750</strain>
    </source>
</reference>
<accession>O52903</accession>
<gene>
    <name evidence="1" type="primary">btuB</name>
</gene>
<sequence>MIKKSLLCTALSVTAFSGWAQDTRPDTLVVTANRFQQPRSAVLAPITVVTRQDIDRWQSTSVNDVLRRLPGVDIAQYGGMGQNSSISIRGTNASHVLVLIDGVRLNLAGVSGAADLSQFPVSLVQRIEYIRGPRSAVYGSDAIGGVVNIITTREKPGTELTAGVGSNGYQNYDVSTQQQLGENTRVTLMGDYAYTKGFDVVAYGSTGSQAQPDKDGFLSKTLYGALEHNFSDTWSGFVRGYGYDNRTNYDSYYSPGSPLLDTRKLYSQSWDAGLRFNGELIQSQLVSSYSHSKDYNYDPDYGRYDSSATLDEMKQYNVQWSNSIVVGHGNVGAGVDWQKQTTEPGTGYVTDGYDQRNTGLYLTGLQQLGDFTFEGAARSDDNSEFGRHGTWQTSAGWEFIEGYRFIASYGTSYKAPNLGQLHGYYGNSNLDPEQSKQWEGAFEGLTAGVNWRVSGYRNDIDDMIDYDPHTEKYFNEGKVRIKGVEATANFDTGPLAHTLSYDMVDSRNAITDKPLARRSKQQVKYQLDWQVYDFDWGLTYHYLGTRYDTDYVTYQPVKMGGVSLWDLAVSYPITSQLTVRGKIANRFDKDYETVYGYATAGREYTLSGSYTF</sequence>
<keyword id="KW-0106">Calcium</keyword>
<keyword id="KW-0998">Cell outer membrane</keyword>
<keyword id="KW-0406">Ion transport</keyword>
<keyword id="KW-0472">Membrane</keyword>
<keyword id="KW-0479">Metal-binding</keyword>
<keyword id="KW-0626">Porin</keyword>
<keyword id="KW-0732">Signal</keyword>
<keyword id="KW-0798">TonB box</keyword>
<keyword id="KW-0812">Transmembrane</keyword>
<keyword id="KW-1134">Transmembrane beta strand</keyword>
<keyword id="KW-0813">Transport</keyword>